<dbReference type="EMBL" id="AB300657">
    <property type="protein sequence ID" value="BAF56588.1"/>
    <property type="molecule type" value="mRNA"/>
</dbReference>
<dbReference type="EMBL" id="EF427619">
    <property type="protein sequence ID" value="ABO09844.1"/>
    <property type="molecule type" value="mRNA"/>
</dbReference>
<dbReference type="EMBL" id="AE014297">
    <property type="protein sequence ID" value="ACL83507.1"/>
    <property type="molecule type" value="Genomic_DNA"/>
</dbReference>
<dbReference type="EMBL" id="AY070879">
    <property type="protein sequence ID" value="AFA55188.1"/>
    <property type="molecule type" value="mRNA"/>
</dbReference>
<dbReference type="RefSeq" id="NP_001138049.1">
    <property type="nucleotide sequence ID" value="NM_001144577.2"/>
</dbReference>
<dbReference type="IntAct" id="A3RLR1">
    <property type="interactions" value="1"/>
</dbReference>
<dbReference type="STRING" id="7227.FBpp0289273"/>
<dbReference type="PaxDb" id="7227-FBpp0289273"/>
<dbReference type="EnsemblMetazoa" id="FBtr0299996">
    <property type="protein sequence ID" value="FBpp0289273"/>
    <property type="gene ID" value="FBgn0259733"/>
</dbReference>
<dbReference type="GeneID" id="7354377"/>
<dbReference type="KEGG" id="dme:Dmel_CG42387"/>
<dbReference type="AGR" id="FB:FBgn0259733"/>
<dbReference type="CTD" id="7354377"/>
<dbReference type="FlyBase" id="FBgn0259733">
    <property type="gene designation" value="tal-AA"/>
</dbReference>
<dbReference type="VEuPathDB" id="VectorBase:FBgn0259733"/>
<dbReference type="HOGENOM" id="CLU_3392730_0_0_1"/>
<dbReference type="InParanoid" id="A3RLR1"/>
<dbReference type="OrthoDB" id="7802345at2759"/>
<dbReference type="BioGRID-ORCS" id="7354377">
    <property type="hits" value="0 hits in 1 CRISPR screen"/>
</dbReference>
<dbReference type="ChiTaRS" id="tal-AA">
    <property type="organism name" value="fly"/>
</dbReference>
<dbReference type="GenomeRNAi" id="7354377"/>
<dbReference type="PRO" id="PR:A3RLR1"/>
<dbReference type="Proteomes" id="UP000000803">
    <property type="component" value="Chromosome 3R"/>
</dbReference>
<dbReference type="Bgee" id="FBgn0259733">
    <property type="expression patterns" value="Expressed in saliva-secreting gland and 26 other cell types or tissues"/>
</dbReference>
<dbReference type="GO" id="GO:0005737">
    <property type="term" value="C:cytoplasm"/>
    <property type="evidence" value="ECO:0007669"/>
    <property type="project" value="UniProtKB-SubCell"/>
</dbReference>
<dbReference type="GO" id="GO:0005634">
    <property type="term" value="C:nucleus"/>
    <property type="evidence" value="ECO:0007669"/>
    <property type="project" value="UniProtKB-SubCell"/>
</dbReference>
<dbReference type="GO" id="GO:0007015">
    <property type="term" value="P:actin filament organization"/>
    <property type="evidence" value="ECO:0000316"/>
    <property type="project" value="FlyBase"/>
</dbReference>
<dbReference type="GO" id="GO:0002009">
    <property type="term" value="P:morphogenesis of an epithelium"/>
    <property type="evidence" value="ECO:0000316"/>
    <property type="project" value="FlyBase"/>
</dbReference>
<dbReference type="CDD" id="cd20258">
    <property type="entry name" value="Tal_Pri"/>
    <property type="match status" value="1"/>
</dbReference>
<dbReference type="InterPro" id="IPR054084">
    <property type="entry name" value="Tal-AA"/>
</dbReference>
<dbReference type="Pfam" id="PF21899">
    <property type="entry name" value="Tal_Pri"/>
    <property type="match status" value="1"/>
</dbReference>
<organism>
    <name type="scientific">Drosophila melanogaster</name>
    <name type="common">Fruit fly</name>
    <dbReference type="NCBI Taxonomy" id="7227"/>
    <lineage>
        <taxon>Eukaryota</taxon>
        <taxon>Metazoa</taxon>
        <taxon>Ecdysozoa</taxon>
        <taxon>Arthropoda</taxon>
        <taxon>Hexapoda</taxon>
        <taxon>Insecta</taxon>
        <taxon>Pterygota</taxon>
        <taxon>Neoptera</taxon>
        <taxon>Endopterygota</taxon>
        <taxon>Diptera</taxon>
        <taxon>Brachycera</taxon>
        <taxon>Muscomorpha</taxon>
        <taxon>Ephydroidea</taxon>
        <taxon>Drosophilidae</taxon>
        <taxon>Drosophila</taxon>
        <taxon>Sophophora</taxon>
    </lineage>
</organism>
<reference evidence="15" key="1">
    <citation type="journal article" date="2007" name="Nat. Cell Biol.">
        <title>Small peptide regulators of actin-based cell morphogenesis encoded by a polycistronic mRNA.</title>
        <authorList>
            <person name="Kondo T."/>
            <person name="Hashimoto Y."/>
            <person name="Kato K."/>
            <person name="Inagaki S."/>
            <person name="Hayashi S."/>
            <person name="Kageyama Y."/>
        </authorList>
    </citation>
    <scope>NUCLEOTIDE SEQUENCE [MRNA]</scope>
    <scope>FUNCTION</scope>
    <scope>DISRUPTION PHENOTYPE</scope>
</reference>
<reference evidence="13" key="2">
    <citation type="journal article" date="2007" name="PLoS Biol.">
        <title>Peptides encoded by short ORFs control development and define a new eukaryotic gene family.</title>
        <authorList>
            <person name="Galindo M.I."/>
            <person name="Pueyo J.I."/>
            <person name="Fouix S."/>
            <person name="Bishop S.A."/>
            <person name="Couso J.P."/>
        </authorList>
    </citation>
    <scope>NUCLEOTIDE SEQUENCE [MRNA]</scope>
    <scope>FUNCTION</scope>
    <scope>DEVELOPMENTAL STAGE</scope>
    <scope>DISRUPTION PHENOTYPE</scope>
</reference>
<reference evidence="17" key="3">
    <citation type="journal article" date="2000" name="Science">
        <title>The genome sequence of Drosophila melanogaster.</title>
        <authorList>
            <person name="Adams M.D."/>
            <person name="Celniker S.E."/>
            <person name="Holt R.A."/>
            <person name="Evans C.A."/>
            <person name="Gocayne J.D."/>
            <person name="Amanatides P.G."/>
            <person name="Scherer S.E."/>
            <person name="Li P.W."/>
            <person name="Hoskins R.A."/>
            <person name="Galle R.F."/>
            <person name="George R.A."/>
            <person name="Lewis S.E."/>
            <person name="Richards S."/>
            <person name="Ashburner M."/>
            <person name="Henderson S.N."/>
            <person name="Sutton G.G."/>
            <person name="Wortman J.R."/>
            <person name="Yandell M.D."/>
            <person name="Zhang Q."/>
            <person name="Chen L.X."/>
            <person name="Brandon R.C."/>
            <person name="Rogers Y.-H.C."/>
            <person name="Blazej R.G."/>
            <person name="Champe M."/>
            <person name="Pfeiffer B.D."/>
            <person name="Wan K.H."/>
            <person name="Doyle C."/>
            <person name="Baxter E.G."/>
            <person name="Helt G."/>
            <person name="Nelson C.R."/>
            <person name="Miklos G.L.G."/>
            <person name="Abril J.F."/>
            <person name="Agbayani A."/>
            <person name="An H.-J."/>
            <person name="Andrews-Pfannkoch C."/>
            <person name="Baldwin D."/>
            <person name="Ballew R.M."/>
            <person name="Basu A."/>
            <person name="Baxendale J."/>
            <person name="Bayraktaroglu L."/>
            <person name="Beasley E.M."/>
            <person name="Beeson K.Y."/>
            <person name="Benos P.V."/>
            <person name="Berman B.P."/>
            <person name="Bhandari D."/>
            <person name="Bolshakov S."/>
            <person name="Borkova D."/>
            <person name="Botchan M.R."/>
            <person name="Bouck J."/>
            <person name="Brokstein P."/>
            <person name="Brottier P."/>
            <person name="Burtis K.C."/>
            <person name="Busam D.A."/>
            <person name="Butler H."/>
            <person name="Cadieu E."/>
            <person name="Center A."/>
            <person name="Chandra I."/>
            <person name="Cherry J.M."/>
            <person name="Cawley S."/>
            <person name="Dahlke C."/>
            <person name="Davenport L.B."/>
            <person name="Davies P."/>
            <person name="de Pablos B."/>
            <person name="Delcher A."/>
            <person name="Deng Z."/>
            <person name="Mays A.D."/>
            <person name="Dew I."/>
            <person name="Dietz S.M."/>
            <person name="Dodson K."/>
            <person name="Doup L.E."/>
            <person name="Downes M."/>
            <person name="Dugan-Rocha S."/>
            <person name="Dunkov B.C."/>
            <person name="Dunn P."/>
            <person name="Durbin K.J."/>
            <person name="Evangelista C.C."/>
            <person name="Ferraz C."/>
            <person name="Ferriera S."/>
            <person name="Fleischmann W."/>
            <person name="Fosler C."/>
            <person name="Gabrielian A.E."/>
            <person name="Garg N.S."/>
            <person name="Gelbart W.M."/>
            <person name="Glasser K."/>
            <person name="Glodek A."/>
            <person name="Gong F."/>
            <person name="Gorrell J.H."/>
            <person name="Gu Z."/>
            <person name="Guan P."/>
            <person name="Harris M."/>
            <person name="Harris N.L."/>
            <person name="Harvey D.A."/>
            <person name="Heiman T.J."/>
            <person name="Hernandez J.R."/>
            <person name="Houck J."/>
            <person name="Hostin D."/>
            <person name="Houston K.A."/>
            <person name="Howland T.J."/>
            <person name="Wei M.-H."/>
            <person name="Ibegwam C."/>
            <person name="Jalali M."/>
            <person name="Kalush F."/>
            <person name="Karpen G.H."/>
            <person name="Ke Z."/>
            <person name="Kennison J.A."/>
            <person name="Ketchum K.A."/>
            <person name="Kimmel B.E."/>
            <person name="Kodira C.D."/>
            <person name="Kraft C.L."/>
            <person name="Kravitz S."/>
            <person name="Kulp D."/>
            <person name="Lai Z."/>
            <person name="Lasko P."/>
            <person name="Lei Y."/>
            <person name="Levitsky A.A."/>
            <person name="Li J.H."/>
            <person name="Li Z."/>
            <person name="Liang Y."/>
            <person name="Lin X."/>
            <person name="Liu X."/>
            <person name="Mattei B."/>
            <person name="McIntosh T.C."/>
            <person name="McLeod M.P."/>
            <person name="McPherson D."/>
            <person name="Merkulov G."/>
            <person name="Milshina N.V."/>
            <person name="Mobarry C."/>
            <person name="Morris J."/>
            <person name="Moshrefi A."/>
            <person name="Mount S.M."/>
            <person name="Moy M."/>
            <person name="Murphy B."/>
            <person name="Murphy L."/>
            <person name="Muzny D.M."/>
            <person name="Nelson D.L."/>
            <person name="Nelson D.R."/>
            <person name="Nelson K.A."/>
            <person name="Nixon K."/>
            <person name="Nusskern D.R."/>
            <person name="Pacleb J.M."/>
            <person name="Palazzolo M."/>
            <person name="Pittman G.S."/>
            <person name="Pan S."/>
            <person name="Pollard J."/>
            <person name="Puri V."/>
            <person name="Reese M.G."/>
            <person name="Reinert K."/>
            <person name="Remington K."/>
            <person name="Saunders R.D.C."/>
            <person name="Scheeler F."/>
            <person name="Shen H."/>
            <person name="Shue B.C."/>
            <person name="Siden-Kiamos I."/>
            <person name="Simpson M."/>
            <person name="Skupski M.P."/>
            <person name="Smith T.J."/>
            <person name="Spier E."/>
            <person name="Spradling A.C."/>
            <person name="Stapleton M."/>
            <person name="Strong R."/>
            <person name="Sun E."/>
            <person name="Svirskas R."/>
            <person name="Tector C."/>
            <person name="Turner R."/>
            <person name="Venter E."/>
            <person name="Wang A.H."/>
            <person name="Wang X."/>
            <person name="Wang Z.-Y."/>
            <person name="Wassarman D.A."/>
            <person name="Weinstock G.M."/>
            <person name="Weissenbach J."/>
            <person name="Williams S.M."/>
            <person name="Woodage T."/>
            <person name="Worley K.C."/>
            <person name="Wu D."/>
            <person name="Yang S."/>
            <person name="Yao Q.A."/>
            <person name="Ye J."/>
            <person name="Yeh R.-F."/>
            <person name="Zaveri J.S."/>
            <person name="Zhan M."/>
            <person name="Zhang G."/>
            <person name="Zhao Q."/>
            <person name="Zheng L."/>
            <person name="Zheng X.H."/>
            <person name="Zhong F.N."/>
            <person name="Zhong W."/>
            <person name="Zhou X."/>
            <person name="Zhu S.C."/>
            <person name="Zhu X."/>
            <person name="Smith H.O."/>
            <person name="Gibbs R.A."/>
            <person name="Myers E.W."/>
            <person name="Rubin G.M."/>
            <person name="Venter J.C."/>
        </authorList>
    </citation>
    <scope>NUCLEOTIDE SEQUENCE [LARGE SCALE GENOMIC DNA]</scope>
    <source>
        <strain evidence="17">Berkeley</strain>
    </source>
</reference>
<reference evidence="17" key="4">
    <citation type="journal article" date="2002" name="Genome Biol.">
        <title>Annotation of the Drosophila melanogaster euchromatic genome: a systematic review.</title>
        <authorList>
            <person name="Misra S."/>
            <person name="Crosby M.A."/>
            <person name="Mungall C.J."/>
            <person name="Matthews B.B."/>
            <person name="Campbell K.S."/>
            <person name="Hradecky P."/>
            <person name="Huang Y."/>
            <person name="Kaminker J.S."/>
            <person name="Millburn G.H."/>
            <person name="Prochnik S.E."/>
            <person name="Smith C.D."/>
            <person name="Tupy J.L."/>
            <person name="Whitfield E.J."/>
            <person name="Bayraktaroglu L."/>
            <person name="Berman B.P."/>
            <person name="Bettencourt B.R."/>
            <person name="Celniker S.E."/>
            <person name="de Grey A.D.N.J."/>
            <person name="Drysdale R.A."/>
            <person name="Harris N.L."/>
            <person name="Richter J."/>
            <person name="Russo S."/>
            <person name="Schroeder A.J."/>
            <person name="Shu S.Q."/>
            <person name="Stapleton M."/>
            <person name="Yamada C."/>
            <person name="Ashburner M."/>
            <person name="Gelbart W.M."/>
            <person name="Rubin G.M."/>
            <person name="Lewis S.E."/>
        </authorList>
    </citation>
    <scope>GENOME REANNOTATION</scope>
    <source>
        <strain evidence="17">Berkeley</strain>
    </source>
</reference>
<reference evidence="14" key="5">
    <citation type="journal article" date="2002" name="Genome Biol.">
        <title>A Drosophila full-length cDNA resource.</title>
        <authorList>
            <person name="Stapleton M."/>
            <person name="Carlson J.W."/>
            <person name="Brokstein P."/>
            <person name="Yu C."/>
            <person name="Champe M."/>
            <person name="George R.A."/>
            <person name="Guarin H."/>
            <person name="Kronmiller B."/>
            <person name="Pacleb J.M."/>
            <person name="Park S."/>
            <person name="Wan K.H."/>
            <person name="Rubin G.M."/>
            <person name="Celniker S.E."/>
        </authorList>
    </citation>
    <scope>NUCLEOTIDE SEQUENCE [LARGE SCALE MRNA]</scope>
</reference>
<reference evidence="10" key="6">
    <citation type="journal article" date="2010" name="Science">
        <title>Small peptides switch the transcriptional activity of Shavenbaby during Drosophila embryogenesis.</title>
        <authorList>
            <person name="Kondo T."/>
            <person name="Plaza S."/>
            <person name="Zanet J."/>
            <person name="Benrabah E."/>
            <person name="Valenti P."/>
            <person name="Hashimoto Y."/>
            <person name="Kobayashi S."/>
            <person name="Payre F."/>
            <person name="Kageyama Y."/>
        </authorList>
    </citation>
    <scope>FUNCTION</scope>
</reference>
<reference evidence="10" key="7">
    <citation type="journal article" date="2008" name="Dev. Biol.">
        <title>The 11-aminoacid long Tarsal-less peptides trigger a cell signal in Drosophila leg development.</title>
        <authorList>
            <person name="Pueyo J.I."/>
            <person name="Couso J.P."/>
        </authorList>
    </citation>
    <scope>FUNCTION</scope>
    <scope>DEVELOPMENTAL STAGE</scope>
</reference>
<reference evidence="10" key="8">
    <citation type="journal article" date="2011" name="Dev. Biol.">
        <title>Tarsal-less peptides control Notch signalling through the Shavenbaby transcription factor.</title>
        <authorList>
            <person name="Pueyo J.I."/>
            <person name="Couso J.P."/>
        </authorList>
    </citation>
    <scope>FUNCTION</scope>
</reference>
<reference evidence="10" key="9">
    <citation type="journal article" date="2011" name="J. Biomed. Sci.">
        <title>Identification of 11-amino acid peptides that disrupt Notch-mediated processes in Drosophila.</title>
        <authorList>
            <person name="Pi H."/>
            <person name="Huang Y.C."/>
            <person name="Chen I.C."/>
            <person name="Lin C.D."/>
            <person name="Yeh H.F."/>
            <person name="Pai L.M."/>
        </authorList>
    </citation>
    <scope>FUNCTION</scope>
    <scope>DEVELOPMENTAL STAGE</scope>
</reference>
<reference evidence="10" key="10">
    <citation type="journal article" date="2014" name="Nat. Cell Biol.">
        <title>Pri peptides are mediators of ecdysone for the temporal control of development.</title>
        <authorList>
            <person name="Chanut-Delalande H."/>
            <person name="Hashimoto Y."/>
            <person name="Pelissier-Monier A."/>
            <person name="Spokony R."/>
            <person name="Dib A."/>
            <person name="Kondo T."/>
            <person name="Bohere J."/>
            <person name="Niimi K."/>
            <person name="Latapie Y."/>
            <person name="Inagaki S."/>
            <person name="Dubois L."/>
            <person name="Valenti P."/>
            <person name="Polesello C."/>
            <person name="Kobayashi S."/>
            <person name="Moussian B."/>
            <person name="White K.P."/>
            <person name="Plaza S."/>
            <person name="Kageyama Y."/>
            <person name="Payre F."/>
        </authorList>
    </citation>
    <scope>FUNCTION</scope>
    <scope>DEVELOPMENTAL STAGE</scope>
    <scope>INDUCTION BY ECDYSONE</scope>
</reference>
<reference evidence="10" key="11">
    <citation type="journal article" date="2015" name="Science">
        <title>Pri sORF peptides induce selective proteasome-mediated protein processing.</title>
        <authorList>
            <person name="Zanet J."/>
            <person name="Benrabah E."/>
            <person name="Li T."/>
            <person name="Pelissier-Monier A."/>
            <person name="Chanut-Delalande H."/>
            <person name="Ronsin B."/>
            <person name="Bellen H.J."/>
            <person name="Payre F."/>
            <person name="Plaza S."/>
        </authorList>
    </citation>
    <scope>FUNCTION</scope>
    <scope>SUBCELLULAR LOCATION</scope>
</reference>
<name>TALAA_DROME</name>
<accession>A3RLR1</accession>
<keyword id="KW-0963">Cytoplasm</keyword>
<keyword id="KW-0217">Developmental protein</keyword>
<keyword id="KW-0539">Nucleus</keyword>
<keyword id="KW-1185">Reference proteome</keyword>
<keyword id="KW-0677">Repeat</keyword>
<comment type="function">
    <text evidence="2 3 4 5 6 7 8 9">One of four peptides (tal-1A, tal-2A, tal-3A and tal-AA) produced from a polycistronic gene that function redundantly in several developmental processes (PubMed:17439302, PubMed:17486114, PubMed:21527259, PubMed:25344753). Required in early stages of leg development for the intercalation of the tarsal segments during the mid-third instar stage and later for tarsal joint formation (PubMed:17439302, PubMed:18801356, PubMed:21527259). Promotes the post-translational modification of ovo isoform B (svb) into its active form which in turn initiates trichome development and promotes tarsal joint development (PubMed:20647469, PubMed:21527259, PubMed:26383956). This is likely due to recruitment of the E3 ubiquitin-protein ligase Ubr3 to svb for ubiquitination of its N-terminus, converting svb into a transcriptional activator (PubMed:26383956). Also enhances interaction of Ubr3 with Diap1 (PubMed:26383956). Required for correct wing and leg formation through its regulation of several genes including those in the Notch signaling pathway (PubMed:18801356, PubMed:21527259, PubMed:21682860). Essential for denticle formation and may have a role in the developmental timing of trichome differentiation (PubMed:17486114, PubMed:25344753). Essential for the development of taenidial folds in the trachea (PubMed:17486114).</text>
</comment>
<comment type="subcellular location">
    <subcellularLocation>
        <location evidence="9">Cytoplasm</location>
    </subcellularLocation>
    <subcellularLocation>
        <location evidence="9">Nucleus</location>
    </subcellularLocation>
</comment>
<comment type="developmental stage">
    <text evidence="2 4 7 8">At early stages of embryogenesis, the polycistronic RNA is expressed in seven segmentally separated blastoderm stripes and in a cluster of cells in the anterior part of the embryo (PubMed:17439302). By stage 13 to the end of embryo development, it is expressed in the dorsal trunks, posterior spiracles, pharynx, hindgut and the area which forms the denticle belts (PubMed:17439302). In the leg disk, it is expressed in a ring pattern presumed to be developing tarsal region around 80 to 96 hour after egg laying (AEL) and then in the tarsal furrow at the mid-third instar larval stage (PubMed:17439302, PubMed:18801356). Not detected in the tarsal primordium after 100h AEL but is still expressed in a dorsal chordotonal organ of the leg disk (PubMed:17439302). In pupae, expressed broadly throughout the leg disk 0-3 hour after puparium formation (APF) but is not detected in this region 6 hours APF (PubMed:25344753). High expression 4-8 hours APF in the presumptive joints between tarsal segments (PubMed:21682860). In the noctum expressed from 40 to 44 hours APF (PubMed:25344753). In wing disks of third stage larvae, expressed in two anterior stripes and later in the precursors for chemosensory organs (PubMed:21682860). From late third stage instar larvae to early pupal stages, it is also expressed in the wing provein cells that develop into longitudinal veins L2-L5 (PubMed:21682860). In eye disks, expressed in preclusters for presumptive R8 photoreceptors and in a stripe of cells in the posterior region of the disk (PubMed:21682860).</text>
</comment>
<comment type="induction">
    <text evidence="8">Polycistronic RNA up-regulated by ecdysone.</text>
</comment>
<comment type="disruption phenotype">
    <text evidence="2 3">Simultaneous knockout of tal-1A, tal-2A, tal-3A and tal-AA is embryonic lethal (PubMed:17439302, PubMed:17486114). In embryos chitin secretion and formation of the cuticular exoskeleton appears to be normal (PubMed:17439302, PubMed:17486114). However embryos display a loss of denticle belts and dorsal hairs (PubMed:17439302, PubMed:17486114). Segment-specific epidermal sensory organs are present and segments form normally (PubMed:17439302). The cephalopharyngeal skeleton is lost, and the head skeleton and posterior spiracles are deformed (PubMed:17439302). In the developing leg, tarsal constriction occurs but the tarsal fold does not form (PubMed:17439302). The tracheal system is abnormal displaying a loss of network integrity, an irregular tube diameter and the absence of taenidial folds (PubMed:17439302, PubMed:17486114). Cell packing is not affected, but there is no accumulation of F-actin at the sites of denticle differentiation or formation of F-actin bundles during taenidial development and tracheal tube dilation (stages 14 and 16) (PubMed:17486114). Other F-actin based developmental processes such as filopodia formation of tracheal tip cells, dorsal closure, mitosis or tight packing of denticle cells are unaffected (PubMed:17486114). Denticle and tracheal defects can be rescued by ectopic expression of any one of the four tal peptides (tal-1A, tal-2A, tal-3A and tal-AA) (PubMed:17486114).</text>
</comment>
<comment type="miscellaneous">
    <text evidence="2 3">This protein is produced by a polycistronic gene which also produces tal-1A, tal-2A and tal-3A from non-overlapping reading frames (PubMed:17439302, PubMed:17486114). tal-1A and tal-2A produce the same protein from different reading frames (PubMed:17439302, PubMed:17486114).</text>
</comment>
<gene>
    <name evidence="16" type="primary">tal-AA</name>
    <name evidence="15" type="synonym">pri</name>
    <name evidence="16" type="synonym">tal</name>
    <name evidence="16" type="ORF">CG42387</name>
</gene>
<protein>
    <recommendedName>
        <fullName evidence="16">Peptide tarsal-less AA</fullName>
    </recommendedName>
    <alternativeName>
        <fullName evidence="15">Peptide polished rice 4</fullName>
    </alternativeName>
</protein>
<sequence length="32" mass="3855">MLDPTGTYRRPRDTQDSRQKRRQDCLDPTGQY</sequence>
<proteinExistence type="evidence at transcript level"/>
<evidence type="ECO:0000256" key="1">
    <source>
        <dbReference type="SAM" id="MobiDB-lite"/>
    </source>
</evidence>
<evidence type="ECO:0000269" key="2">
    <source>
    </source>
</evidence>
<evidence type="ECO:0000269" key="3">
    <source>
    </source>
</evidence>
<evidence type="ECO:0000269" key="4">
    <source>
    </source>
</evidence>
<evidence type="ECO:0000269" key="5">
    <source>
    </source>
</evidence>
<evidence type="ECO:0000269" key="6">
    <source>
    </source>
</evidence>
<evidence type="ECO:0000269" key="7">
    <source>
    </source>
</evidence>
<evidence type="ECO:0000269" key="8">
    <source>
    </source>
</evidence>
<evidence type="ECO:0000269" key="9">
    <source>
    </source>
</evidence>
<evidence type="ECO:0000305" key="10"/>
<evidence type="ECO:0000305" key="11">
    <source>
    </source>
</evidence>
<evidence type="ECO:0000305" key="12">
    <source>
    </source>
</evidence>
<evidence type="ECO:0000312" key="13">
    <source>
        <dbReference type="EMBL" id="ABO09844.1"/>
    </source>
</evidence>
<evidence type="ECO:0000312" key="14">
    <source>
        <dbReference type="EMBL" id="AFA55188.1"/>
    </source>
</evidence>
<evidence type="ECO:0000312" key="15">
    <source>
        <dbReference type="EMBL" id="BAF56588.1"/>
    </source>
</evidence>
<evidence type="ECO:0000312" key="16">
    <source>
        <dbReference type="FlyBase" id="FBgn0259733"/>
    </source>
</evidence>
<evidence type="ECO:0000312" key="17">
    <source>
        <dbReference type="Proteomes" id="UP000000803"/>
    </source>
</evidence>
<feature type="chain" id="PRO_0000435524" description="Peptide tarsal-less AA">
    <location>
        <begin position="1"/>
        <end position="32"/>
    </location>
</feature>
<feature type="repeat" description="1" evidence="11 12">
    <location>
        <begin position="2"/>
        <end position="8"/>
    </location>
</feature>
<feature type="repeat" description="2" evidence="11 12">
    <location>
        <begin position="26"/>
        <end position="32"/>
    </location>
</feature>
<feature type="region of interest" description="Disordered" evidence="1">
    <location>
        <begin position="1"/>
        <end position="32"/>
    </location>
</feature>
<feature type="region of interest" description="2 X 7 AA repeats of L-D-P-T-G-[TQ]-Y" evidence="11 12">
    <location>
        <begin position="2"/>
        <end position="32"/>
    </location>
</feature>
<feature type="compositionally biased region" description="Basic and acidic residues" evidence="1">
    <location>
        <begin position="10"/>
        <end position="25"/>
    </location>
</feature>